<name>AP37_ORYSJ</name>
<proteinExistence type="inferred from homology"/>
<evidence type="ECO:0000250" key="1">
    <source>
        <dbReference type="UniProtKB" id="P42210"/>
    </source>
</evidence>
<evidence type="ECO:0000255" key="2"/>
<evidence type="ECO:0000255" key="3">
    <source>
        <dbReference type="PROSITE-ProRule" id="PRU00498"/>
    </source>
</evidence>
<evidence type="ECO:0000255" key="4">
    <source>
        <dbReference type="PROSITE-ProRule" id="PRU01103"/>
    </source>
</evidence>
<evidence type="ECO:0000256" key="5">
    <source>
        <dbReference type="SAM" id="MobiDB-lite"/>
    </source>
</evidence>
<evidence type="ECO:0000269" key="6">
    <source>
    </source>
</evidence>
<evidence type="ECO:0000303" key="7">
    <source>
    </source>
</evidence>
<evidence type="ECO:0000305" key="8"/>
<evidence type="ECO:0000312" key="9">
    <source>
        <dbReference type="EMBL" id="BAF14837.1"/>
    </source>
</evidence>
<evidence type="ECO:0000312" key="10">
    <source>
        <dbReference type="EMBL" id="CAD40872.2"/>
    </source>
</evidence>
<sequence>MNAAVLLLLLALAALPASCAPPRSFRLELASVDASAADAANLTEHELLRRAIQRSRYRLAGIGMARGEAASARKAVVAETPIMPAGGEYLVKLGIGTPPYKFTAAIDTASDLIWTQCQPCTGCYHQVDPMFNPRVSSTYAALPCSSDTCDELDVHRCGHDDDESCQYTYTYSGNATTEGTLAVDKLVIGEDAFRGVAFGCSTSSTGGAPPPQASGVVGLGRGPLSLVSQLSVRRFAYCLPPPASRIPGKLVLGADADAARNATNRIAVPMRRDPRYPSYYYLNLDGLLIGDRAMSLPPTTTTTATATATAPAPAPTPSPNATAVAVGDANRYGMIIDIASTITFLEASLYDELVNDLEVEIRLPRGTGSSLGLDLCFILPDGVAFDRVYVPAVALAFDGRWLRLDKARLFAEDRESGMMCLMVGRAEAGSVSILGNFQQQNMQVLYNLRRGRVTFVQSPCGALR</sequence>
<feature type="signal peptide" evidence="2">
    <location>
        <begin position="1"/>
        <end position="19"/>
    </location>
</feature>
<feature type="chain" id="PRO_5007213614" description="Aspartyl protease 37">
    <location>
        <begin position="20"/>
        <end position="464"/>
    </location>
</feature>
<feature type="domain" description="Peptidase A1" evidence="4">
    <location>
        <begin position="89"/>
        <end position="456"/>
    </location>
</feature>
<feature type="region of interest" description="Disordered" evidence="5">
    <location>
        <begin position="299"/>
        <end position="319"/>
    </location>
</feature>
<feature type="compositionally biased region" description="Low complexity" evidence="5">
    <location>
        <begin position="299"/>
        <end position="311"/>
    </location>
</feature>
<feature type="active site" evidence="4">
    <location>
        <position position="107"/>
    </location>
</feature>
<feature type="active site" evidence="4">
    <location>
        <position position="337"/>
    </location>
</feature>
<feature type="glycosylation site" description="N-linked (GlcNAc...) asparagine" evidence="3">
    <location>
        <position position="41"/>
    </location>
</feature>
<feature type="glycosylation site" description="N-linked (GlcNAc...) asparagine" evidence="3">
    <location>
        <position position="174"/>
    </location>
</feature>
<feature type="glycosylation site" description="N-linked (GlcNAc...) asparagine" evidence="3">
    <location>
        <position position="261"/>
    </location>
</feature>
<feature type="glycosylation site" description="N-linked (GlcNAc...) asparagine" evidence="3">
    <location>
        <position position="320"/>
    </location>
</feature>
<feature type="disulfide bond" evidence="1">
    <location>
        <begin position="117"/>
        <end position="123"/>
    </location>
</feature>
<feature type="disulfide bond" evidence="1">
    <location>
        <begin position="376"/>
        <end position="420"/>
    </location>
</feature>
<gene>
    <name evidence="7" type="primary">AP37</name>
    <name evidence="9" type="ordered locus">Os04g0448500</name>
    <name evidence="8" type="ordered locus">LOC_Os04g37570</name>
    <name evidence="10" type="ORF">OSJNBa0064H22.11</name>
</gene>
<keyword id="KW-0064">Aspartyl protease</keyword>
<keyword id="KW-1015">Disulfide bond</keyword>
<keyword id="KW-0325">Glycoprotein</keyword>
<keyword id="KW-0378">Hydrolase</keyword>
<keyword id="KW-0645">Protease</keyword>
<keyword id="KW-1185">Reference proteome</keyword>
<keyword id="KW-0732">Signal</keyword>
<accession>Q7XV21</accession>
<organism>
    <name type="scientific">Oryza sativa subsp. japonica</name>
    <name type="common">Rice</name>
    <dbReference type="NCBI Taxonomy" id="39947"/>
    <lineage>
        <taxon>Eukaryota</taxon>
        <taxon>Viridiplantae</taxon>
        <taxon>Streptophyta</taxon>
        <taxon>Embryophyta</taxon>
        <taxon>Tracheophyta</taxon>
        <taxon>Spermatophyta</taxon>
        <taxon>Magnoliopsida</taxon>
        <taxon>Liliopsida</taxon>
        <taxon>Poales</taxon>
        <taxon>Poaceae</taxon>
        <taxon>BOP clade</taxon>
        <taxon>Oryzoideae</taxon>
        <taxon>Oryzeae</taxon>
        <taxon>Oryzinae</taxon>
        <taxon>Oryza</taxon>
        <taxon>Oryza sativa</taxon>
    </lineage>
</organism>
<comment type="function">
    <text evidence="6">Anther-specific aspartic protease involved in tapetal programmed cell death (PCD). Directly regulated by the transcription factor EAT1/DTD in anthers during tapetum PCD and degeneration.</text>
</comment>
<comment type="similarity">
    <text evidence="4">Belongs to the peptidase A1 family.</text>
</comment>
<reference key="1">
    <citation type="journal article" date="2002" name="Nature">
        <title>Sequence and analysis of rice chromosome 4.</title>
        <authorList>
            <person name="Feng Q."/>
            <person name="Zhang Y."/>
            <person name="Hao P."/>
            <person name="Wang S."/>
            <person name="Fu G."/>
            <person name="Huang Y."/>
            <person name="Li Y."/>
            <person name="Zhu J."/>
            <person name="Liu Y."/>
            <person name="Hu X."/>
            <person name="Jia P."/>
            <person name="Zhang Y."/>
            <person name="Zhao Q."/>
            <person name="Ying K."/>
            <person name="Yu S."/>
            <person name="Tang Y."/>
            <person name="Weng Q."/>
            <person name="Zhang L."/>
            <person name="Lu Y."/>
            <person name="Mu J."/>
            <person name="Lu Y."/>
            <person name="Zhang L.S."/>
            <person name="Yu Z."/>
            <person name="Fan D."/>
            <person name="Liu X."/>
            <person name="Lu T."/>
            <person name="Li C."/>
            <person name="Wu Y."/>
            <person name="Sun T."/>
            <person name="Lei H."/>
            <person name="Li T."/>
            <person name="Hu H."/>
            <person name="Guan J."/>
            <person name="Wu M."/>
            <person name="Zhang R."/>
            <person name="Zhou B."/>
            <person name="Chen Z."/>
            <person name="Chen L."/>
            <person name="Jin Z."/>
            <person name="Wang R."/>
            <person name="Yin H."/>
            <person name="Cai Z."/>
            <person name="Ren S."/>
            <person name="Lv G."/>
            <person name="Gu W."/>
            <person name="Zhu G."/>
            <person name="Tu Y."/>
            <person name="Jia J."/>
            <person name="Zhang Y."/>
            <person name="Chen J."/>
            <person name="Kang H."/>
            <person name="Chen X."/>
            <person name="Shao C."/>
            <person name="Sun Y."/>
            <person name="Hu Q."/>
            <person name="Zhang X."/>
            <person name="Zhang W."/>
            <person name="Wang L."/>
            <person name="Ding C."/>
            <person name="Sheng H."/>
            <person name="Gu J."/>
            <person name="Chen S."/>
            <person name="Ni L."/>
            <person name="Zhu F."/>
            <person name="Chen W."/>
            <person name="Lan L."/>
            <person name="Lai Y."/>
            <person name="Cheng Z."/>
            <person name="Gu M."/>
            <person name="Jiang J."/>
            <person name="Li J."/>
            <person name="Hong G."/>
            <person name="Xue Y."/>
            <person name="Han B."/>
        </authorList>
    </citation>
    <scope>NUCLEOTIDE SEQUENCE [LARGE SCALE GENOMIC DNA]</scope>
    <source>
        <strain>cv. Nipponbare</strain>
    </source>
</reference>
<reference key="2">
    <citation type="journal article" date="2005" name="Nature">
        <title>The map-based sequence of the rice genome.</title>
        <authorList>
            <consortium name="International rice genome sequencing project (IRGSP)"/>
        </authorList>
    </citation>
    <scope>NUCLEOTIDE SEQUENCE [LARGE SCALE GENOMIC DNA]</scope>
    <source>
        <strain>cv. Nipponbare</strain>
    </source>
</reference>
<reference key="3">
    <citation type="journal article" date="2008" name="Nucleic Acids Res.">
        <title>The rice annotation project database (RAP-DB): 2008 update.</title>
        <authorList>
            <consortium name="The rice annotation project (RAP)"/>
        </authorList>
    </citation>
    <scope>GENOME REANNOTATION</scope>
    <source>
        <strain>cv. Nipponbare</strain>
    </source>
</reference>
<reference key="4">
    <citation type="journal article" date="2013" name="Rice">
        <title>Improvement of the Oryza sativa Nipponbare reference genome using next generation sequence and optical map data.</title>
        <authorList>
            <person name="Kawahara Y."/>
            <person name="de la Bastide M."/>
            <person name="Hamilton J.P."/>
            <person name="Kanamori H."/>
            <person name="McCombie W.R."/>
            <person name="Ouyang S."/>
            <person name="Schwartz D.C."/>
            <person name="Tanaka T."/>
            <person name="Wu J."/>
            <person name="Zhou S."/>
            <person name="Childs K.L."/>
            <person name="Davidson R.M."/>
            <person name="Lin H."/>
            <person name="Quesada-Ocampo L."/>
            <person name="Vaillancourt B."/>
            <person name="Sakai H."/>
            <person name="Lee S.S."/>
            <person name="Kim J."/>
            <person name="Numa H."/>
            <person name="Itoh T."/>
            <person name="Buell C.R."/>
            <person name="Matsumoto T."/>
        </authorList>
    </citation>
    <scope>GENOME REANNOTATION</scope>
    <source>
        <strain>cv. Nipponbare</strain>
    </source>
</reference>
<reference key="5">
    <citation type="journal article" date="2013" name="Nat. Commun.">
        <title>EAT1 promotes tapetal cell death by regulating aspartic proteases during male reproductive development in rice.</title>
        <authorList>
            <person name="Niu N."/>
            <person name="Liang W."/>
            <person name="Yang X."/>
            <person name="Jin W."/>
            <person name="Wilson Z.A."/>
            <person name="Hu J."/>
            <person name="Zhang D."/>
        </authorList>
    </citation>
    <scope>FUNCTION</scope>
</reference>
<dbReference type="EC" id="3.4.23.-" evidence="8"/>
<dbReference type="EMBL" id="AL606448">
    <property type="protein sequence ID" value="CAD40872.2"/>
    <property type="molecule type" value="Genomic_DNA"/>
</dbReference>
<dbReference type="EMBL" id="AP008210">
    <property type="protein sequence ID" value="BAF14837.1"/>
    <property type="molecule type" value="Genomic_DNA"/>
</dbReference>
<dbReference type="EMBL" id="AP014960">
    <property type="protein sequence ID" value="BAS89430.1"/>
    <property type="molecule type" value="Genomic_DNA"/>
</dbReference>
<dbReference type="RefSeq" id="XP_015635682.1">
    <property type="nucleotide sequence ID" value="XM_015780196.1"/>
</dbReference>
<dbReference type="SMR" id="Q7XV21"/>
<dbReference type="STRING" id="39947.Q7XV21"/>
<dbReference type="GlyCosmos" id="Q7XV21">
    <property type="glycosylation" value="4 sites, No reported glycans"/>
</dbReference>
<dbReference type="PaxDb" id="39947-Q7XV21"/>
<dbReference type="EnsemblPlants" id="Os04t0448500-01">
    <property type="protein sequence ID" value="Os04t0448500-01"/>
    <property type="gene ID" value="Os04g0448500"/>
</dbReference>
<dbReference type="Gramene" id="Os04t0448500-01">
    <property type="protein sequence ID" value="Os04t0448500-01"/>
    <property type="gene ID" value="Os04g0448500"/>
</dbReference>
<dbReference type="KEGG" id="dosa:Os04g0448500"/>
<dbReference type="eggNOG" id="KOG1339">
    <property type="taxonomic scope" value="Eukaryota"/>
</dbReference>
<dbReference type="HOGENOM" id="CLU_005738_1_3_1"/>
<dbReference type="InParanoid" id="Q7XV21"/>
<dbReference type="OMA" id="DANRYGM"/>
<dbReference type="OrthoDB" id="660550at2759"/>
<dbReference type="Proteomes" id="UP000000763">
    <property type="component" value="Chromosome 4"/>
</dbReference>
<dbReference type="Proteomes" id="UP000059680">
    <property type="component" value="Chromosome 4"/>
</dbReference>
<dbReference type="GO" id="GO:0005576">
    <property type="term" value="C:extracellular region"/>
    <property type="evidence" value="ECO:0000318"/>
    <property type="project" value="GO_Central"/>
</dbReference>
<dbReference type="GO" id="GO:0004190">
    <property type="term" value="F:aspartic-type endopeptidase activity"/>
    <property type="evidence" value="ECO:0000318"/>
    <property type="project" value="GO_Central"/>
</dbReference>
<dbReference type="GO" id="GO:0006508">
    <property type="term" value="P:proteolysis"/>
    <property type="evidence" value="ECO:0007669"/>
    <property type="project" value="UniProtKB-KW"/>
</dbReference>
<dbReference type="GO" id="GO:0043067">
    <property type="term" value="P:regulation of programmed cell death"/>
    <property type="evidence" value="ECO:0000315"/>
    <property type="project" value="UniProtKB"/>
</dbReference>
<dbReference type="CDD" id="cd05476">
    <property type="entry name" value="pepsin_A_like_plant"/>
    <property type="match status" value="1"/>
</dbReference>
<dbReference type="FunFam" id="2.40.70.10:FF:000031">
    <property type="entry name" value="Aspartyl protease AED1"/>
    <property type="match status" value="1"/>
</dbReference>
<dbReference type="FunFam" id="2.40.70.10:FF:000155">
    <property type="entry name" value="Eukaryotic aspartyl protease family protein"/>
    <property type="match status" value="1"/>
</dbReference>
<dbReference type="Gene3D" id="2.40.70.10">
    <property type="entry name" value="Acid Proteases"/>
    <property type="match status" value="2"/>
</dbReference>
<dbReference type="InterPro" id="IPR034161">
    <property type="entry name" value="Pepsin-like_plant"/>
</dbReference>
<dbReference type="InterPro" id="IPR033121">
    <property type="entry name" value="PEPTIDASE_A1"/>
</dbReference>
<dbReference type="InterPro" id="IPR021109">
    <property type="entry name" value="Peptidase_aspartic_dom_sf"/>
</dbReference>
<dbReference type="InterPro" id="IPR051708">
    <property type="entry name" value="Plant_Aspart_Prot_A1"/>
</dbReference>
<dbReference type="InterPro" id="IPR032799">
    <property type="entry name" value="TAXi_C"/>
</dbReference>
<dbReference type="InterPro" id="IPR032861">
    <property type="entry name" value="TAXi_N"/>
</dbReference>
<dbReference type="PANTHER" id="PTHR47967:SF6">
    <property type="entry name" value="ASPARTYL PROTEASE 37"/>
    <property type="match status" value="1"/>
</dbReference>
<dbReference type="PANTHER" id="PTHR47967">
    <property type="entry name" value="OS07G0603500 PROTEIN-RELATED"/>
    <property type="match status" value="1"/>
</dbReference>
<dbReference type="Pfam" id="PF14541">
    <property type="entry name" value="TAXi_C"/>
    <property type="match status" value="1"/>
</dbReference>
<dbReference type="Pfam" id="PF14543">
    <property type="entry name" value="TAXi_N"/>
    <property type="match status" value="1"/>
</dbReference>
<dbReference type="SUPFAM" id="SSF50630">
    <property type="entry name" value="Acid proteases"/>
    <property type="match status" value="1"/>
</dbReference>
<dbReference type="PROSITE" id="PS51767">
    <property type="entry name" value="PEPTIDASE_A1"/>
    <property type="match status" value="1"/>
</dbReference>
<protein>
    <recommendedName>
        <fullName evidence="8">Aspartyl protease 37</fullName>
        <ecNumber evidence="8">3.4.23.-</ecNumber>
    </recommendedName>
</protein>